<sequence length="442" mass="50771">MYFRFGKGLQIQLRHSSKAVRSQLRWNSTTKLIKPIASTQHPFLVKPVTPHESYVSCTIFNEKGDVTAVSHKFPKWEFLQKYGLYPRDLRKIDSSTIDVIPSFVIKPKCILVNVLHIKAMIQKDKVFVFDTTNPDAAIKLGVLMYDLESKLSQRNINYQGKSVSYQENYEHRALESILINVMTCLETEYKYHHSVCGMILNDLENQIDRDKLRDLLIKSKTLTAFAQKSVLLRDLLDELLESDEDLAGMYLSEKKHPDADDHSDLEMLLETYYKQCDEYVQQSESLIQDIKSTEEIVNIILDANRNSLLLFELKVTVYTLGFTVATLVPAFYGMNLKNFIEDSNWGFASVVGLSVAAAAVVTITNMRALRSVTKLTLLNNHTGANNKKHLANAKLALDKEIPTFWDRWLTSARVLWSGREVLYKDGSKRDMIWKWLVDDDKK</sequence>
<gene>
    <name type="primary">MRS2</name>
    <name type="ordered locus">KLLA0F02519g</name>
</gene>
<proteinExistence type="inferred from homology"/>
<accession>Q6CLJ5</accession>
<protein>
    <recommendedName>
        <fullName>Mitochondrial inner membrane magnesium transporter MRS2</fullName>
    </recommendedName>
    <alternativeName>
        <fullName>RNA-splicing protein MRS2</fullName>
    </alternativeName>
</protein>
<reference key="1">
    <citation type="journal article" date="2004" name="Nature">
        <title>Genome evolution in yeasts.</title>
        <authorList>
            <person name="Dujon B."/>
            <person name="Sherman D."/>
            <person name="Fischer G."/>
            <person name="Durrens P."/>
            <person name="Casaregola S."/>
            <person name="Lafontaine I."/>
            <person name="de Montigny J."/>
            <person name="Marck C."/>
            <person name="Neuveglise C."/>
            <person name="Talla E."/>
            <person name="Goffard N."/>
            <person name="Frangeul L."/>
            <person name="Aigle M."/>
            <person name="Anthouard V."/>
            <person name="Babour A."/>
            <person name="Barbe V."/>
            <person name="Barnay S."/>
            <person name="Blanchin S."/>
            <person name="Beckerich J.-M."/>
            <person name="Beyne E."/>
            <person name="Bleykasten C."/>
            <person name="Boisrame A."/>
            <person name="Boyer J."/>
            <person name="Cattolico L."/>
            <person name="Confanioleri F."/>
            <person name="de Daruvar A."/>
            <person name="Despons L."/>
            <person name="Fabre E."/>
            <person name="Fairhead C."/>
            <person name="Ferry-Dumazet H."/>
            <person name="Groppi A."/>
            <person name="Hantraye F."/>
            <person name="Hennequin C."/>
            <person name="Jauniaux N."/>
            <person name="Joyet P."/>
            <person name="Kachouri R."/>
            <person name="Kerrest A."/>
            <person name="Koszul R."/>
            <person name="Lemaire M."/>
            <person name="Lesur I."/>
            <person name="Ma L."/>
            <person name="Muller H."/>
            <person name="Nicaud J.-M."/>
            <person name="Nikolski M."/>
            <person name="Oztas S."/>
            <person name="Ozier-Kalogeropoulos O."/>
            <person name="Pellenz S."/>
            <person name="Potier S."/>
            <person name="Richard G.-F."/>
            <person name="Straub M.-L."/>
            <person name="Suleau A."/>
            <person name="Swennen D."/>
            <person name="Tekaia F."/>
            <person name="Wesolowski-Louvel M."/>
            <person name="Westhof E."/>
            <person name="Wirth B."/>
            <person name="Zeniou-Meyer M."/>
            <person name="Zivanovic Y."/>
            <person name="Bolotin-Fukuhara M."/>
            <person name="Thierry A."/>
            <person name="Bouchier C."/>
            <person name="Caudron B."/>
            <person name="Scarpelli C."/>
            <person name="Gaillardin C."/>
            <person name="Weissenbach J."/>
            <person name="Wincker P."/>
            <person name="Souciet J.-L."/>
        </authorList>
    </citation>
    <scope>NUCLEOTIDE SEQUENCE [LARGE SCALE GENOMIC DNA]</scope>
    <source>
        <strain>ATCC 8585 / CBS 2359 / DSM 70799 / NBRC 1267 / NRRL Y-1140 / WM37</strain>
    </source>
</reference>
<feature type="transit peptide" description="Mitochondrion" evidence="2">
    <location>
        <begin position="1"/>
        <end position="15"/>
    </location>
</feature>
<feature type="chain" id="PRO_0000043246" description="Mitochondrial inner membrane magnesium transporter MRS2">
    <location>
        <begin position="16"/>
        <end position="442"/>
    </location>
</feature>
<feature type="transmembrane region" description="Helical" evidence="2">
    <location>
        <begin position="308"/>
        <end position="328"/>
    </location>
</feature>
<feature type="transmembrane region" description="Helical" evidence="2">
    <location>
        <begin position="344"/>
        <end position="364"/>
    </location>
</feature>
<feature type="short sequence motif" description="YGMN">
    <location>
        <begin position="332"/>
        <end position="335"/>
    </location>
</feature>
<organism>
    <name type="scientific">Kluyveromyces lactis (strain ATCC 8585 / CBS 2359 / DSM 70799 / NBRC 1267 / NRRL Y-1140 / WM37)</name>
    <name type="common">Yeast</name>
    <name type="synonym">Candida sphaerica</name>
    <dbReference type="NCBI Taxonomy" id="284590"/>
    <lineage>
        <taxon>Eukaryota</taxon>
        <taxon>Fungi</taxon>
        <taxon>Dikarya</taxon>
        <taxon>Ascomycota</taxon>
        <taxon>Saccharomycotina</taxon>
        <taxon>Saccharomycetes</taxon>
        <taxon>Saccharomycetales</taxon>
        <taxon>Saccharomycetaceae</taxon>
        <taxon>Kluyveromyces</taxon>
    </lineage>
</organism>
<comment type="function">
    <text evidence="1">High-conductance magnesium-selective channel that mediates the influx of magnesium into the mitochondrial matrix. Essential for the splicing of mRNA group II introns in mitochondria by affecting mitochondrial magnesium concentrations, which are critical for group II intron splicing. It also suppresses a variety of mitochondrial intron mutations and its absence may disturb the assembly of mitochondrial membrane complexes.</text>
</comment>
<comment type="subunit">
    <text evidence="1">Homopentamer. Forms homooligomers. Interacts with MFM1.</text>
</comment>
<comment type="subcellular location">
    <subcellularLocation>
        <location evidence="1">Mitochondrion inner membrane</location>
        <topology evidence="1">Multi-pass membrane protein</topology>
    </subcellularLocation>
</comment>
<comment type="similarity">
    <text evidence="3">Belongs to the CorA metal ion transporter (MIT) (TC 1.A.35) family.</text>
</comment>
<evidence type="ECO:0000250" key="1">
    <source>
        <dbReference type="UniProtKB" id="Q01926"/>
    </source>
</evidence>
<evidence type="ECO:0000255" key="2"/>
<evidence type="ECO:0000305" key="3"/>
<keyword id="KW-0406">Ion transport</keyword>
<keyword id="KW-0460">Magnesium</keyword>
<keyword id="KW-0472">Membrane</keyword>
<keyword id="KW-0496">Mitochondrion</keyword>
<keyword id="KW-0999">Mitochondrion inner membrane</keyword>
<keyword id="KW-1185">Reference proteome</keyword>
<keyword id="KW-0809">Transit peptide</keyword>
<keyword id="KW-0812">Transmembrane</keyword>
<keyword id="KW-1133">Transmembrane helix</keyword>
<keyword id="KW-0813">Transport</keyword>
<name>MRS2_KLULA</name>
<dbReference type="EMBL" id="CR382126">
    <property type="protein sequence ID" value="CAG97901.1"/>
    <property type="molecule type" value="Genomic_DNA"/>
</dbReference>
<dbReference type="RefSeq" id="XP_455194.1">
    <property type="nucleotide sequence ID" value="XM_455194.1"/>
</dbReference>
<dbReference type="SMR" id="Q6CLJ5"/>
<dbReference type="FunCoup" id="Q6CLJ5">
    <property type="interactions" value="384"/>
</dbReference>
<dbReference type="STRING" id="284590.Q6CLJ5"/>
<dbReference type="PaxDb" id="284590-Q6CLJ5"/>
<dbReference type="KEGG" id="kla:KLLA0_F02519g"/>
<dbReference type="eggNOG" id="KOG2662">
    <property type="taxonomic scope" value="Eukaryota"/>
</dbReference>
<dbReference type="HOGENOM" id="CLU_025144_1_0_1"/>
<dbReference type="InParanoid" id="Q6CLJ5"/>
<dbReference type="OMA" id="TLLIHMF"/>
<dbReference type="Proteomes" id="UP000000598">
    <property type="component" value="Chromosome F"/>
</dbReference>
<dbReference type="GO" id="GO:0005743">
    <property type="term" value="C:mitochondrial inner membrane"/>
    <property type="evidence" value="ECO:0000250"/>
    <property type="project" value="UniProtKB"/>
</dbReference>
<dbReference type="GO" id="GO:0015095">
    <property type="term" value="F:magnesium ion transmembrane transporter activity"/>
    <property type="evidence" value="ECO:0000250"/>
    <property type="project" value="UniProtKB"/>
</dbReference>
<dbReference type="GO" id="GO:0045016">
    <property type="term" value="P:mitochondrial magnesium ion transmembrane transport"/>
    <property type="evidence" value="ECO:0000250"/>
    <property type="project" value="UniProtKB"/>
</dbReference>
<dbReference type="CDD" id="cd12823">
    <property type="entry name" value="Mrs2_Mfm1p-like"/>
    <property type="match status" value="1"/>
</dbReference>
<dbReference type="FunFam" id="1.20.58.340:FF:000005">
    <property type="entry name" value="Inner membrane magnesium transporter MRS2"/>
    <property type="match status" value="1"/>
</dbReference>
<dbReference type="FunFam" id="2.40.128.330:FF:000005">
    <property type="entry name" value="Magnesium transporter MRS2, mitochondrial"/>
    <property type="match status" value="1"/>
</dbReference>
<dbReference type="Gene3D" id="2.40.128.330">
    <property type="match status" value="1"/>
</dbReference>
<dbReference type="Gene3D" id="1.20.58.340">
    <property type="entry name" value="Magnesium transport protein CorA, transmembrane region"/>
    <property type="match status" value="1"/>
</dbReference>
<dbReference type="InterPro" id="IPR045863">
    <property type="entry name" value="CorA_TM1_TM2"/>
</dbReference>
<dbReference type="InterPro" id="IPR039204">
    <property type="entry name" value="MRS2-like"/>
</dbReference>
<dbReference type="PANTHER" id="PTHR13890:SF27">
    <property type="entry name" value="MAGNESIUM TRANSPORTER MRS2, MITOCHONDRIAL"/>
    <property type="match status" value="1"/>
</dbReference>
<dbReference type="PANTHER" id="PTHR13890">
    <property type="entry name" value="RNA SPLICING PROTEIN MRS2, MITOCHONDRIAL"/>
    <property type="match status" value="1"/>
</dbReference>
<dbReference type="Pfam" id="PF22099">
    <property type="entry name" value="MRS2-like"/>
    <property type="match status" value="1"/>
</dbReference>
<dbReference type="SUPFAM" id="SSF144083">
    <property type="entry name" value="Magnesium transport protein CorA, transmembrane region"/>
    <property type="match status" value="1"/>
</dbReference>